<comment type="function">
    <text evidence="3 4 7">Catalyzes the oxidation of the less abundant 1,2-dihydro-beta-NAD(P) and 1,6-dihydro-beta-NAD(P) to form beta-NAD(P)(+). The enzyme hormone is secreted by the kidney, and circulates in blood and modulates cardiac function and systemic blood pressure. Lowers blood pressure in vivo by decreasing cardiac contractility and heart rate and preventing a compensatory increase in peripheral vascular tone, suggesting a causal link to the increased plasma catecholamine and heightened cardiovascular risk. High concentrations of catecholamines activate plasma renalase and promotes its secretion and synthesis.</text>
</comment>
<comment type="catalytic activity">
    <reaction evidence="6 7">
        <text>1,2-dihydro-beta-NAD + O2 + H(+) = H2O2 + NAD(+)</text>
        <dbReference type="Rhea" id="RHEA:40395"/>
        <dbReference type="ChEBI" id="CHEBI:15378"/>
        <dbReference type="ChEBI" id="CHEBI:15379"/>
        <dbReference type="ChEBI" id="CHEBI:16240"/>
        <dbReference type="ChEBI" id="CHEBI:57540"/>
        <dbReference type="ChEBI" id="CHEBI:88138"/>
        <dbReference type="EC" id="1.6.3.5"/>
    </reaction>
</comment>
<comment type="catalytic activity">
    <reaction evidence="6 7">
        <text>1,2-dihydro-beta-NADP + O2 + H(+) = H2O2 + NADP(+)</text>
        <dbReference type="Rhea" id="RHEA:40399"/>
        <dbReference type="ChEBI" id="CHEBI:15378"/>
        <dbReference type="ChEBI" id="CHEBI:15379"/>
        <dbReference type="ChEBI" id="CHEBI:16240"/>
        <dbReference type="ChEBI" id="CHEBI:58349"/>
        <dbReference type="ChEBI" id="CHEBI:88137"/>
        <dbReference type="EC" id="1.6.3.5"/>
    </reaction>
</comment>
<comment type="catalytic activity">
    <reaction evidence="6 7">
        <text>1,6-dihydro-beta-NADP + O2 + H(+) = H2O2 + NADP(+)</text>
        <dbReference type="Rhea" id="RHEA:48000"/>
        <dbReference type="ChEBI" id="CHEBI:15378"/>
        <dbReference type="ChEBI" id="CHEBI:15379"/>
        <dbReference type="ChEBI" id="CHEBI:16240"/>
        <dbReference type="ChEBI" id="CHEBI:58349"/>
        <dbReference type="ChEBI" id="CHEBI:88139"/>
        <dbReference type="EC" id="1.6.3.5"/>
    </reaction>
</comment>
<comment type="catalytic activity">
    <reaction evidence="6 7">
        <text>1,6-dihydro-beta-NAD + O2 + H(+) = H2O2 + NAD(+)</text>
        <dbReference type="Rhea" id="RHEA:47996"/>
        <dbReference type="ChEBI" id="CHEBI:15378"/>
        <dbReference type="ChEBI" id="CHEBI:15379"/>
        <dbReference type="ChEBI" id="CHEBI:16240"/>
        <dbReference type="ChEBI" id="CHEBI:57540"/>
        <dbReference type="ChEBI" id="CHEBI:88140"/>
        <dbReference type="EC" id="1.6.3.5"/>
    </reaction>
</comment>
<comment type="cofactor">
    <cofactor evidence="5">
        <name>FAD</name>
        <dbReference type="ChEBI" id="CHEBI:57692"/>
    </cofactor>
</comment>
<comment type="interaction">
    <interactant intactId="EBI-3386081">
        <id>Q5VYX0</id>
    </interactant>
    <interactant intactId="EBI-1174388">
        <id>P23634</id>
        <label>ATP2B4</label>
    </interactant>
    <organismsDiffer>false</organismsDiffer>
    <experiments>3</experiments>
</comment>
<comment type="subcellular location">
    <subcellularLocation>
        <location evidence="3">Secreted</location>
    </subcellularLocation>
</comment>
<comment type="alternative products">
    <event type="alternative splicing"/>
    <isoform>
        <id>Q5VYX0-1</id>
        <name>1</name>
        <sequence type="displayed"/>
    </isoform>
    <isoform>
        <id>Q5VYX0-2</id>
        <name>2</name>
        <sequence type="described" ref="VSP_015211 VSP_015212"/>
    </isoform>
</comment>
<comment type="tissue specificity">
    <text evidence="3">Secreted into the blood by the kidney. Highly expressed in the kidney, expressed at lower level in heart, skeletal muscle and small intestine. Its plasma concentration is markedly reduced in patients with end-stage renal disease, as compared with healthy subjects.</text>
</comment>
<comment type="similarity">
    <text evidence="10">Belongs to the renalase family.</text>
</comment>
<proteinExistence type="evidence at protein level"/>
<dbReference type="EC" id="1.6.3.5" evidence="6 7"/>
<dbReference type="EMBL" id="AK002080">
    <property type="protein sequence ID" value="BAA92073.1"/>
    <property type="molecule type" value="mRNA"/>
</dbReference>
<dbReference type="EMBL" id="AL353149">
    <property type="status" value="NOT_ANNOTATED_CDS"/>
    <property type="molecule type" value="Genomic_DNA"/>
</dbReference>
<dbReference type="EMBL" id="AL365185">
    <property type="status" value="NOT_ANNOTATED_CDS"/>
    <property type="molecule type" value="Genomic_DNA"/>
</dbReference>
<dbReference type="EMBL" id="AL139406">
    <property type="status" value="NOT_ANNOTATED_CDS"/>
    <property type="molecule type" value="Genomic_DNA"/>
</dbReference>
<dbReference type="EMBL" id="BC005364">
    <property type="protein sequence ID" value="AAH05364.1"/>
    <property type="molecule type" value="mRNA"/>
</dbReference>
<dbReference type="CCDS" id="CCDS31239.1">
    <molecule id="Q5VYX0-1"/>
</dbReference>
<dbReference type="CCDS" id="CCDS7388.1">
    <molecule id="Q5VYX0-2"/>
</dbReference>
<dbReference type="RefSeq" id="NP_001026879.2">
    <molecule id="Q5VYX0-1"/>
    <property type="nucleotide sequence ID" value="NM_001031709.3"/>
</dbReference>
<dbReference type="RefSeq" id="NP_060833.1">
    <molecule id="Q5VYX0-2"/>
    <property type="nucleotide sequence ID" value="NM_018363.4"/>
</dbReference>
<dbReference type="RefSeq" id="XP_011538226.1">
    <molecule id="Q5VYX0-2"/>
    <property type="nucleotide sequence ID" value="XM_011539924.4"/>
</dbReference>
<dbReference type="RefSeq" id="XP_016871869.1">
    <molecule id="Q5VYX0-2"/>
    <property type="nucleotide sequence ID" value="XM_017016380.3"/>
</dbReference>
<dbReference type="PDB" id="3QJ4">
    <property type="method" value="X-ray"/>
    <property type="resolution" value="2.50 A"/>
    <property type="chains" value="A/B=1-342"/>
</dbReference>
<dbReference type="PDBsum" id="3QJ4"/>
<dbReference type="SMR" id="Q5VYX0"/>
<dbReference type="BioGRID" id="120609">
    <property type="interactions" value="2"/>
</dbReference>
<dbReference type="FunCoup" id="Q5VYX0">
    <property type="interactions" value="150"/>
</dbReference>
<dbReference type="IntAct" id="Q5VYX0">
    <property type="interactions" value="36"/>
</dbReference>
<dbReference type="STRING" id="9606.ENSP00000332530"/>
<dbReference type="iPTMnet" id="Q5VYX0"/>
<dbReference type="PhosphoSitePlus" id="Q5VYX0"/>
<dbReference type="BioMuta" id="RNLS"/>
<dbReference type="DMDM" id="73914006"/>
<dbReference type="jPOST" id="Q5VYX0"/>
<dbReference type="MassIVE" id="Q5VYX0"/>
<dbReference type="PaxDb" id="9606-ENSP00000332530"/>
<dbReference type="PeptideAtlas" id="Q5VYX0"/>
<dbReference type="ProteomicsDB" id="65655">
    <molecule id="Q5VYX0-1"/>
</dbReference>
<dbReference type="ProteomicsDB" id="65656">
    <molecule id="Q5VYX0-2"/>
</dbReference>
<dbReference type="Pumba" id="Q5VYX0"/>
<dbReference type="Antibodypedia" id="30183">
    <property type="antibodies" value="294 antibodies from 31 providers"/>
</dbReference>
<dbReference type="DNASU" id="55328"/>
<dbReference type="Ensembl" id="ENST00000331772.9">
    <molecule id="Q5VYX0-1"/>
    <property type="protein sequence ID" value="ENSP00000332530.4"/>
    <property type="gene ID" value="ENSG00000184719.13"/>
</dbReference>
<dbReference type="Ensembl" id="ENST00000371947.7">
    <molecule id="Q5VYX0-2"/>
    <property type="protein sequence ID" value="ENSP00000361015.3"/>
    <property type="gene ID" value="ENSG00000184719.13"/>
</dbReference>
<dbReference type="GeneID" id="55328"/>
<dbReference type="KEGG" id="hsa:55328"/>
<dbReference type="MANE-Select" id="ENST00000331772.9">
    <property type="protein sequence ID" value="ENSP00000332530.4"/>
    <property type="RefSeq nucleotide sequence ID" value="NM_001031709.3"/>
    <property type="RefSeq protein sequence ID" value="NP_001026879.2"/>
</dbReference>
<dbReference type="UCSC" id="uc001kfd.3">
    <molecule id="Q5VYX0-1"/>
    <property type="organism name" value="human"/>
</dbReference>
<dbReference type="AGR" id="HGNC:25641"/>
<dbReference type="CTD" id="55328"/>
<dbReference type="DisGeNET" id="55328"/>
<dbReference type="GeneCards" id="RNLS"/>
<dbReference type="HGNC" id="HGNC:25641">
    <property type="gene designation" value="RNLS"/>
</dbReference>
<dbReference type="HPA" id="ENSG00000184719">
    <property type="expression patterns" value="Low tissue specificity"/>
</dbReference>
<dbReference type="MalaCards" id="RNLS"/>
<dbReference type="MIM" id="609360">
    <property type="type" value="gene"/>
</dbReference>
<dbReference type="neXtProt" id="NX_Q5VYX0"/>
<dbReference type="OpenTargets" id="ENSG00000184719"/>
<dbReference type="PharmGKB" id="PA165549084"/>
<dbReference type="VEuPathDB" id="HostDB:ENSG00000184719"/>
<dbReference type="eggNOG" id="ENOG502QUZR">
    <property type="taxonomic scope" value="Eukaryota"/>
</dbReference>
<dbReference type="GeneTree" id="ENSGT00390000016052"/>
<dbReference type="HOGENOM" id="CLU_036034_1_0_1"/>
<dbReference type="InParanoid" id="Q5VYX0"/>
<dbReference type="OMA" id="ICGGDAF"/>
<dbReference type="OrthoDB" id="2161133at2759"/>
<dbReference type="PAN-GO" id="Q5VYX0">
    <property type="GO annotations" value="2 GO annotations based on evolutionary models"/>
</dbReference>
<dbReference type="PhylomeDB" id="Q5VYX0"/>
<dbReference type="TreeFam" id="TF332799"/>
<dbReference type="BioCyc" id="MetaCyc:G66-32717-MONOMER"/>
<dbReference type="BRENDA" id="1.6.3.5">
    <property type="organism ID" value="2681"/>
</dbReference>
<dbReference type="PathwayCommons" id="Q5VYX0"/>
<dbReference type="Reactome" id="R-HSA-197264">
    <property type="pathway name" value="Nicotinamide salvaging"/>
</dbReference>
<dbReference type="SignaLink" id="Q5VYX0"/>
<dbReference type="BioGRID-ORCS" id="55328">
    <property type="hits" value="11 hits in 1148 CRISPR screens"/>
</dbReference>
<dbReference type="ChiTaRS" id="RNLS">
    <property type="organism name" value="human"/>
</dbReference>
<dbReference type="EvolutionaryTrace" id="Q5VYX0"/>
<dbReference type="GeneWiki" id="Renalase"/>
<dbReference type="GenomeRNAi" id="55328"/>
<dbReference type="Pharos" id="Q5VYX0">
    <property type="development level" value="Tbio"/>
</dbReference>
<dbReference type="PRO" id="PR:Q5VYX0"/>
<dbReference type="Proteomes" id="UP000005640">
    <property type="component" value="Chromosome 10"/>
</dbReference>
<dbReference type="RNAct" id="Q5VYX0">
    <property type="molecule type" value="protein"/>
</dbReference>
<dbReference type="Bgee" id="ENSG00000184719">
    <property type="expression patterns" value="Expressed in buccal mucosa cell and 155 other cell types or tissues"/>
</dbReference>
<dbReference type="ExpressionAtlas" id="Q5VYX0">
    <property type="expression patterns" value="baseline and differential"/>
</dbReference>
<dbReference type="GO" id="GO:0005576">
    <property type="term" value="C:extracellular region"/>
    <property type="evidence" value="ECO:0000314"/>
    <property type="project" value="UniProtKB"/>
</dbReference>
<dbReference type="GO" id="GO:0005615">
    <property type="term" value="C:extracellular space"/>
    <property type="evidence" value="ECO:0007669"/>
    <property type="project" value="Ensembl"/>
</dbReference>
<dbReference type="GO" id="GO:0051379">
    <property type="term" value="F:epinephrine binding"/>
    <property type="evidence" value="ECO:0000314"/>
    <property type="project" value="UniProtKB"/>
</dbReference>
<dbReference type="GO" id="GO:0097621">
    <property type="term" value="F:monoamine oxidase activity"/>
    <property type="evidence" value="ECO:0000315"/>
    <property type="project" value="UniProtKB"/>
</dbReference>
<dbReference type="GO" id="GO:0070404">
    <property type="term" value="F:NADH binding"/>
    <property type="evidence" value="ECO:0000314"/>
    <property type="project" value="UniProtKB"/>
</dbReference>
<dbReference type="GO" id="GO:0016651">
    <property type="term" value="F:oxidoreductase activity, acting on NAD(P)H"/>
    <property type="evidence" value="ECO:0000314"/>
    <property type="project" value="UniProtKB"/>
</dbReference>
<dbReference type="GO" id="GO:0045776">
    <property type="term" value="P:negative regulation of blood pressure"/>
    <property type="evidence" value="ECO:0000314"/>
    <property type="project" value="UniProtKB"/>
</dbReference>
<dbReference type="GO" id="GO:0010459">
    <property type="term" value="P:negative regulation of heart rate"/>
    <property type="evidence" value="ECO:0000314"/>
    <property type="project" value="UniProtKB"/>
</dbReference>
<dbReference type="GO" id="GO:0071869">
    <property type="term" value="P:response to catecholamine"/>
    <property type="evidence" value="ECO:0007669"/>
    <property type="project" value="Ensembl"/>
</dbReference>
<dbReference type="GO" id="GO:0071871">
    <property type="term" value="P:response to epinephrine"/>
    <property type="evidence" value="ECO:0007669"/>
    <property type="project" value="Ensembl"/>
</dbReference>
<dbReference type="GO" id="GO:0002931">
    <property type="term" value="P:response to ischemia"/>
    <property type="evidence" value="ECO:0007669"/>
    <property type="project" value="Ensembl"/>
</dbReference>
<dbReference type="GO" id="GO:1902074">
    <property type="term" value="P:response to salt"/>
    <property type="evidence" value="ECO:0007669"/>
    <property type="project" value="Ensembl"/>
</dbReference>
<dbReference type="Gene3D" id="3.90.660.10">
    <property type="match status" value="1"/>
</dbReference>
<dbReference type="Gene3D" id="3.50.50.60">
    <property type="entry name" value="FAD/NAD(P)-binding domain"/>
    <property type="match status" value="1"/>
</dbReference>
<dbReference type="InterPro" id="IPR002937">
    <property type="entry name" value="Amino_oxidase"/>
</dbReference>
<dbReference type="InterPro" id="IPR036188">
    <property type="entry name" value="FAD/NAD-bd_sf"/>
</dbReference>
<dbReference type="InterPro" id="IPR040174">
    <property type="entry name" value="RNLS"/>
</dbReference>
<dbReference type="PANTHER" id="PTHR23357">
    <property type="entry name" value="RENALASE"/>
    <property type="match status" value="1"/>
</dbReference>
<dbReference type="PANTHER" id="PTHR23357:SF1">
    <property type="entry name" value="RENALASE"/>
    <property type="match status" value="1"/>
</dbReference>
<dbReference type="Pfam" id="PF01593">
    <property type="entry name" value="Amino_oxidase"/>
    <property type="match status" value="1"/>
</dbReference>
<dbReference type="Pfam" id="PF13450">
    <property type="entry name" value="NAD_binding_8"/>
    <property type="match status" value="1"/>
</dbReference>
<dbReference type="SUPFAM" id="SSF51905">
    <property type="entry name" value="FAD/NAD(P)-binding domain"/>
    <property type="match status" value="1"/>
</dbReference>
<protein>
    <recommendedName>
        <fullName evidence="9">Renalase</fullName>
        <ecNumber evidence="6 7">1.6.3.5</ecNumber>
    </recommendedName>
    <alternativeName>
        <fullName>Monoamine oxidase-C</fullName>
        <shortName>MAO-C</shortName>
    </alternativeName>
</protein>
<organism>
    <name type="scientific">Homo sapiens</name>
    <name type="common">Human</name>
    <dbReference type="NCBI Taxonomy" id="9606"/>
    <lineage>
        <taxon>Eukaryota</taxon>
        <taxon>Metazoa</taxon>
        <taxon>Chordata</taxon>
        <taxon>Craniata</taxon>
        <taxon>Vertebrata</taxon>
        <taxon>Euteleostomi</taxon>
        <taxon>Mammalia</taxon>
        <taxon>Eutheria</taxon>
        <taxon>Euarchontoglires</taxon>
        <taxon>Primates</taxon>
        <taxon>Haplorrhini</taxon>
        <taxon>Catarrhini</taxon>
        <taxon>Hominidae</taxon>
        <taxon>Homo</taxon>
    </lineage>
</organism>
<gene>
    <name type="primary">RNLS</name>
    <name type="synonym">C10orf59</name>
</gene>
<name>RNLS_HUMAN</name>
<feature type="signal peptide" evidence="1">
    <location>
        <begin position="1"/>
        <end position="17"/>
    </location>
</feature>
<feature type="chain" id="PRO_0000019588" description="Renalase">
    <location>
        <begin position="18"/>
        <end position="342"/>
    </location>
</feature>
<feature type="binding site">
    <location>
        <position position="12"/>
    </location>
    <ligand>
        <name>FAD</name>
        <dbReference type="ChEBI" id="CHEBI:57692"/>
    </ligand>
</feature>
<feature type="binding site">
    <location>
        <position position="42"/>
    </location>
    <ligand>
        <name>FAD</name>
        <dbReference type="ChEBI" id="CHEBI:57692"/>
    </ligand>
</feature>
<feature type="binding site">
    <location>
        <begin position="61"/>
        <end position="62"/>
    </location>
    <ligand>
        <name>FAD</name>
        <dbReference type="ChEBI" id="CHEBI:57692"/>
    </ligand>
</feature>
<feature type="splice variant" id="VSP_015211" description="In isoform 2." evidence="8">
    <original>TNAAANCPGQMTLHHKPFLACG</original>
    <variation>PSAGVILGCAKSPWMMAIGFPI</variation>
    <location>
        <begin position="294"/>
        <end position="315"/>
    </location>
</feature>
<feature type="splice variant" id="VSP_015212" description="In isoform 2." evidence="8">
    <location>
        <begin position="316"/>
        <end position="342"/>
    </location>
</feature>
<feature type="sequence variant" id="VAR_023310" description="In dbSNP:rs2296545." evidence="2">
    <original>E</original>
    <variation>D</variation>
    <location>
        <position position="37"/>
    </location>
</feature>
<feature type="strand" evidence="11">
    <location>
        <begin position="2"/>
        <end position="7"/>
    </location>
</feature>
<feature type="helix" evidence="11">
    <location>
        <begin position="11"/>
        <end position="21"/>
    </location>
</feature>
<feature type="strand" evidence="11">
    <location>
        <begin position="28"/>
        <end position="33"/>
    </location>
</feature>
<feature type="strand" evidence="11">
    <location>
        <begin position="35"/>
        <end position="39"/>
    </location>
</feature>
<feature type="helix" evidence="11">
    <location>
        <begin position="41"/>
        <end position="43"/>
    </location>
</feature>
<feature type="strand" evidence="11">
    <location>
        <begin position="45"/>
        <end position="47"/>
    </location>
</feature>
<feature type="strand" evidence="11">
    <location>
        <begin position="55"/>
        <end position="59"/>
    </location>
</feature>
<feature type="strand" evidence="11">
    <location>
        <begin position="63"/>
        <end position="65"/>
    </location>
</feature>
<feature type="helix" evidence="11">
    <location>
        <begin position="69"/>
        <end position="72"/>
    </location>
</feature>
<feature type="helix" evidence="11">
    <location>
        <begin position="74"/>
        <end position="82"/>
    </location>
</feature>
<feature type="strand" evidence="11">
    <location>
        <begin position="103"/>
        <end position="106"/>
    </location>
</feature>
<feature type="helix" evidence="11">
    <location>
        <begin position="113"/>
        <end position="122"/>
    </location>
</feature>
<feature type="strand" evidence="11">
    <location>
        <begin position="125"/>
        <end position="129"/>
    </location>
</feature>
<feature type="strand" evidence="11">
    <location>
        <begin position="132"/>
        <end position="137"/>
    </location>
</feature>
<feature type="strand" evidence="11">
    <location>
        <begin position="139"/>
        <end position="149"/>
    </location>
</feature>
<feature type="strand" evidence="11">
    <location>
        <begin position="152"/>
        <end position="159"/>
    </location>
</feature>
<feature type="helix" evidence="11">
    <location>
        <begin position="163"/>
        <end position="166"/>
    </location>
</feature>
<feature type="helix" evidence="11">
    <location>
        <begin position="173"/>
        <end position="176"/>
    </location>
</feature>
<feature type="helix" evidence="11">
    <location>
        <begin position="179"/>
        <end position="186"/>
    </location>
</feature>
<feature type="strand" evidence="11">
    <location>
        <begin position="193"/>
        <end position="199"/>
    </location>
</feature>
<feature type="strand" evidence="11">
    <location>
        <begin position="211"/>
        <end position="214"/>
    </location>
</feature>
<feature type="strand" evidence="11">
    <location>
        <begin position="219"/>
        <end position="226"/>
    </location>
</feature>
<feature type="helix" evidence="11">
    <location>
        <begin position="227"/>
        <end position="230"/>
    </location>
</feature>
<feature type="strand" evidence="11">
    <location>
        <begin position="241"/>
        <end position="246"/>
    </location>
</feature>
<feature type="helix" evidence="11">
    <location>
        <begin position="248"/>
        <end position="253"/>
    </location>
</feature>
<feature type="turn" evidence="11">
    <location>
        <begin position="254"/>
        <end position="256"/>
    </location>
</feature>
<feature type="helix" evidence="11">
    <location>
        <begin position="259"/>
        <end position="273"/>
    </location>
</feature>
<feature type="strand" evidence="11">
    <location>
        <begin position="281"/>
        <end position="288"/>
    </location>
</feature>
<feature type="strand" evidence="11">
    <location>
        <begin position="292"/>
        <end position="295"/>
    </location>
</feature>
<feature type="strand" evidence="11">
    <location>
        <begin position="298"/>
        <end position="300"/>
    </location>
</feature>
<feature type="strand" evidence="11">
    <location>
        <begin position="304"/>
        <end position="307"/>
    </location>
</feature>
<feature type="turn" evidence="11">
    <location>
        <begin position="308"/>
        <end position="310"/>
    </location>
</feature>
<feature type="strand" evidence="11">
    <location>
        <begin position="311"/>
        <end position="314"/>
    </location>
</feature>
<feature type="helix" evidence="11">
    <location>
        <begin position="317"/>
        <end position="319"/>
    </location>
</feature>
<feature type="helix" evidence="11">
    <location>
        <begin position="324"/>
        <end position="338"/>
    </location>
</feature>
<reference key="1">
    <citation type="journal article" date="2004" name="Nat. Genet.">
        <title>Complete sequencing and characterization of 21,243 full-length human cDNAs.</title>
        <authorList>
            <person name="Ota T."/>
            <person name="Suzuki Y."/>
            <person name="Nishikawa T."/>
            <person name="Otsuki T."/>
            <person name="Sugiyama T."/>
            <person name="Irie R."/>
            <person name="Wakamatsu A."/>
            <person name="Hayashi K."/>
            <person name="Sato H."/>
            <person name="Nagai K."/>
            <person name="Kimura K."/>
            <person name="Makita H."/>
            <person name="Sekine M."/>
            <person name="Obayashi M."/>
            <person name="Nishi T."/>
            <person name="Shibahara T."/>
            <person name="Tanaka T."/>
            <person name="Ishii S."/>
            <person name="Yamamoto J."/>
            <person name="Saito K."/>
            <person name="Kawai Y."/>
            <person name="Isono Y."/>
            <person name="Nakamura Y."/>
            <person name="Nagahari K."/>
            <person name="Murakami K."/>
            <person name="Yasuda T."/>
            <person name="Iwayanagi T."/>
            <person name="Wagatsuma M."/>
            <person name="Shiratori A."/>
            <person name="Sudo H."/>
            <person name="Hosoiri T."/>
            <person name="Kaku Y."/>
            <person name="Kodaira H."/>
            <person name="Kondo H."/>
            <person name="Sugawara M."/>
            <person name="Takahashi M."/>
            <person name="Kanda K."/>
            <person name="Yokoi T."/>
            <person name="Furuya T."/>
            <person name="Kikkawa E."/>
            <person name="Omura Y."/>
            <person name="Abe K."/>
            <person name="Kamihara K."/>
            <person name="Katsuta N."/>
            <person name="Sato K."/>
            <person name="Tanikawa M."/>
            <person name="Yamazaki M."/>
            <person name="Ninomiya K."/>
            <person name="Ishibashi T."/>
            <person name="Yamashita H."/>
            <person name="Murakawa K."/>
            <person name="Fujimori K."/>
            <person name="Tanai H."/>
            <person name="Kimata M."/>
            <person name="Watanabe M."/>
            <person name="Hiraoka S."/>
            <person name="Chiba Y."/>
            <person name="Ishida S."/>
            <person name="Ono Y."/>
            <person name="Takiguchi S."/>
            <person name="Watanabe S."/>
            <person name="Yosida M."/>
            <person name="Hotuta T."/>
            <person name="Kusano J."/>
            <person name="Kanehori K."/>
            <person name="Takahashi-Fujii A."/>
            <person name="Hara H."/>
            <person name="Tanase T.-O."/>
            <person name="Nomura Y."/>
            <person name="Togiya S."/>
            <person name="Komai F."/>
            <person name="Hara R."/>
            <person name="Takeuchi K."/>
            <person name="Arita M."/>
            <person name="Imose N."/>
            <person name="Musashino K."/>
            <person name="Yuuki H."/>
            <person name="Oshima A."/>
            <person name="Sasaki N."/>
            <person name="Aotsuka S."/>
            <person name="Yoshikawa Y."/>
            <person name="Matsunawa H."/>
            <person name="Ichihara T."/>
            <person name="Shiohata N."/>
            <person name="Sano S."/>
            <person name="Moriya S."/>
            <person name="Momiyama H."/>
            <person name="Satoh N."/>
            <person name="Takami S."/>
            <person name="Terashima Y."/>
            <person name="Suzuki O."/>
            <person name="Nakagawa S."/>
            <person name="Senoh A."/>
            <person name="Mizoguchi H."/>
            <person name="Goto Y."/>
            <person name="Shimizu F."/>
            <person name="Wakebe H."/>
            <person name="Hishigaki H."/>
            <person name="Watanabe T."/>
            <person name="Sugiyama A."/>
            <person name="Takemoto M."/>
            <person name="Kawakami B."/>
            <person name="Yamazaki M."/>
            <person name="Watanabe K."/>
            <person name="Kumagai A."/>
            <person name="Itakura S."/>
            <person name="Fukuzumi Y."/>
            <person name="Fujimori Y."/>
            <person name="Komiyama M."/>
            <person name="Tashiro H."/>
            <person name="Tanigami A."/>
            <person name="Fujiwara T."/>
            <person name="Ono T."/>
            <person name="Yamada K."/>
            <person name="Fujii Y."/>
            <person name="Ozaki K."/>
            <person name="Hirao M."/>
            <person name="Ohmori Y."/>
            <person name="Kawabata A."/>
            <person name="Hikiji T."/>
            <person name="Kobatake N."/>
            <person name="Inagaki H."/>
            <person name="Ikema Y."/>
            <person name="Okamoto S."/>
            <person name="Okitani R."/>
            <person name="Kawakami T."/>
            <person name="Noguchi S."/>
            <person name="Itoh T."/>
            <person name="Shigeta K."/>
            <person name="Senba T."/>
            <person name="Matsumura K."/>
            <person name="Nakajima Y."/>
            <person name="Mizuno T."/>
            <person name="Morinaga M."/>
            <person name="Sasaki M."/>
            <person name="Togashi T."/>
            <person name="Oyama M."/>
            <person name="Hata H."/>
            <person name="Watanabe M."/>
            <person name="Komatsu T."/>
            <person name="Mizushima-Sugano J."/>
            <person name="Satoh T."/>
            <person name="Shirai Y."/>
            <person name="Takahashi Y."/>
            <person name="Nakagawa K."/>
            <person name="Okumura K."/>
            <person name="Nagase T."/>
            <person name="Nomura N."/>
            <person name="Kikuchi H."/>
            <person name="Masuho Y."/>
            <person name="Yamashita R."/>
            <person name="Nakai K."/>
            <person name="Yada T."/>
            <person name="Nakamura Y."/>
            <person name="Ohara O."/>
            <person name="Isogai T."/>
            <person name="Sugano S."/>
        </authorList>
    </citation>
    <scope>NUCLEOTIDE SEQUENCE [LARGE SCALE MRNA] (ISOFORM 2)</scope>
    <source>
        <tissue>Placenta</tissue>
    </source>
</reference>
<reference key="2">
    <citation type="journal article" date="2004" name="Nature">
        <title>The DNA sequence and comparative analysis of human chromosome 10.</title>
        <authorList>
            <person name="Deloukas P."/>
            <person name="Earthrowl M.E."/>
            <person name="Grafham D.V."/>
            <person name="Rubenfield M."/>
            <person name="French L."/>
            <person name="Steward C.A."/>
            <person name="Sims S.K."/>
            <person name="Jones M.C."/>
            <person name="Searle S."/>
            <person name="Scott C."/>
            <person name="Howe K."/>
            <person name="Hunt S.E."/>
            <person name="Andrews T.D."/>
            <person name="Gilbert J.G.R."/>
            <person name="Swarbreck D."/>
            <person name="Ashurst J.L."/>
            <person name="Taylor A."/>
            <person name="Battles J."/>
            <person name="Bird C.P."/>
            <person name="Ainscough R."/>
            <person name="Almeida J.P."/>
            <person name="Ashwell R.I.S."/>
            <person name="Ambrose K.D."/>
            <person name="Babbage A.K."/>
            <person name="Bagguley C.L."/>
            <person name="Bailey J."/>
            <person name="Banerjee R."/>
            <person name="Bates K."/>
            <person name="Beasley H."/>
            <person name="Bray-Allen S."/>
            <person name="Brown A.J."/>
            <person name="Brown J.Y."/>
            <person name="Burford D.C."/>
            <person name="Burrill W."/>
            <person name="Burton J."/>
            <person name="Cahill P."/>
            <person name="Camire D."/>
            <person name="Carter N.P."/>
            <person name="Chapman J.C."/>
            <person name="Clark S.Y."/>
            <person name="Clarke G."/>
            <person name="Clee C.M."/>
            <person name="Clegg S."/>
            <person name="Corby N."/>
            <person name="Coulson A."/>
            <person name="Dhami P."/>
            <person name="Dutta I."/>
            <person name="Dunn M."/>
            <person name="Faulkner L."/>
            <person name="Frankish A."/>
            <person name="Frankland J.A."/>
            <person name="Garner P."/>
            <person name="Garnett J."/>
            <person name="Gribble S."/>
            <person name="Griffiths C."/>
            <person name="Grocock R."/>
            <person name="Gustafson E."/>
            <person name="Hammond S."/>
            <person name="Harley J.L."/>
            <person name="Hart E."/>
            <person name="Heath P.D."/>
            <person name="Ho T.P."/>
            <person name="Hopkins B."/>
            <person name="Horne J."/>
            <person name="Howden P.J."/>
            <person name="Huckle E."/>
            <person name="Hynds C."/>
            <person name="Johnson C."/>
            <person name="Johnson D."/>
            <person name="Kana A."/>
            <person name="Kay M."/>
            <person name="Kimberley A.M."/>
            <person name="Kershaw J.K."/>
            <person name="Kokkinaki M."/>
            <person name="Laird G.K."/>
            <person name="Lawlor S."/>
            <person name="Lee H.M."/>
            <person name="Leongamornlert D.A."/>
            <person name="Laird G."/>
            <person name="Lloyd C."/>
            <person name="Lloyd D.M."/>
            <person name="Loveland J."/>
            <person name="Lovell J."/>
            <person name="McLaren S."/>
            <person name="McLay K.E."/>
            <person name="McMurray A."/>
            <person name="Mashreghi-Mohammadi M."/>
            <person name="Matthews L."/>
            <person name="Milne S."/>
            <person name="Nickerson T."/>
            <person name="Nguyen M."/>
            <person name="Overton-Larty E."/>
            <person name="Palmer S.A."/>
            <person name="Pearce A.V."/>
            <person name="Peck A.I."/>
            <person name="Pelan S."/>
            <person name="Phillimore B."/>
            <person name="Porter K."/>
            <person name="Rice C.M."/>
            <person name="Rogosin A."/>
            <person name="Ross M.T."/>
            <person name="Sarafidou T."/>
            <person name="Sehra H.K."/>
            <person name="Shownkeen R."/>
            <person name="Skuce C.D."/>
            <person name="Smith M."/>
            <person name="Standring L."/>
            <person name="Sycamore N."/>
            <person name="Tester J."/>
            <person name="Thorpe A."/>
            <person name="Torcasso W."/>
            <person name="Tracey A."/>
            <person name="Tromans A."/>
            <person name="Tsolas J."/>
            <person name="Wall M."/>
            <person name="Walsh J."/>
            <person name="Wang H."/>
            <person name="Weinstock K."/>
            <person name="West A.P."/>
            <person name="Willey D.L."/>
            <person name="Whitehead S.L."/>
            <person name="Wilming L."/>
            <person name="Wray P.W."/>
            <person name="Young L."/>
            <person name="Chen Y."/>
            <person name="Lovering R.C."/>
            <person name="Moschonas N.K."/>
            <person name="Siebert R."/>
            <person name="Fechtel K."/>
            <person name="Bentley D."/>
            <person name="Durbin R.M."/>
            <person name="Hubbard T."/>
            <person name="Doucette-Stamm L."/>
            <person name="Beck S."/>
            <person name="Smith D.R."/>
            <person name="Rogers J."/>
        </authorList>
    </citation>
    <scope>NUCLEOTIDE SEQUENCE [LARGE SCALE GENOMIC DNA]</scope>
</reference>
<reference key="3">
    <citation type="journal article" date="2004" name="Genome Res.">
        <title>The status, quality, and expansion of the NIH full-length cDNA project: the Mammalian Gene Collection (MGC).</title>
        <authorList>
            <consortium name="The MGC Project Team"/>
        </authorList>
    </citation>
    <scope>NUCLEOTIDE SEQUENCE [LARGE SCALE MRNA] (ISOFORM 1)</scope>
    <scope>VARIANT ASP-37</scope>
    <source>
        <tissue>Kidney</tissue>
    </source>
</reference>
<reference key="4">
    <citation type="journal article" date="2005" name="J. Clin. Invest.">
        <title>Renalase is a novel, soluble monoamine oxidase that regulates cardiac function and blood pressure.</title>
        <authorList>
            <person name="Xu J."/>
            <person name="Li G."/>
            <person name="Wang P."/>
            <person name="Velazquez H."/>
            <person name="Yao X."/>
            <person name="Li Y."/>
            <person name="Wu Y."/>
            <person name="Peixoto A."/>
            <person name="Crowley S."/>
            <person name="Desir G.V."/>
        </authorList>
    </citation>
    <scope>FUNCTION</scope>
    <scope>SUBCELLULAR LOCATION</scope>
    <scope>TISSUE SPECIFICITY</scope>
</reference>
<reference key="5">
    <citation type="journal article" date="2007" name="J. Neural Transm.">
        <title>Renalase, a catecholamine-metabolising enzyme?</title>
        <authorList>
            <person name="Boomsma F."/>
            <person name="Tipton K.F."/>
        </authorList>
    </citation>
    <scope>FUNCTION</scope>
</reference>
<reference key="6">
    <citation type="journal article" date="2013" name="J. Am. Chem. Soc.">
        <title>Renalase is an alpha-NAD(P)H oxidase/anomerase.</title>
        <authorList>
            <person name="Beaupre B.A."/>
            <person name="Carmichael B.R."/>
            <person name="Hoag M.R."/>
            <person name="Shah D.D."/>
            <person name="Moran G.R."/>
        </authorList>
    </citation>
    <scope>CATALYTIC ACTIVITY (ISOFORM 1)</scope>
</reference>
<reference key="7">
    <citation type="journal article" date="2015" name="Biochemistry">
        <title>Metabolic function for human renalase: oxidation of isomeric forms of beta-NAD(P)H that are inhibitory to primary metabolism.</title>
        <authorList>
            <person name="Beaupre B.A."/>
            <person name="Hoag M.R."/>
            <person name="Roman J."/>
            <person name="Foersterling F.H."/>
            <person name="Moran G.R."/>
        </authorList>
    </citation>
    <scope>FUNCTION</scope>
    <scope>CATALYTIC ACTIVITY</scope>
</reference>
<reference key="8">
    <citation type="journal article" date="2011" name="J. Mol. Biol.">
        <title>FAD-binding site and NADP reactivity in human renalase: a new enzyme involved in blood pressure regulation.</title>
        <authorList>
            <person name="Milani M."/>
            <person name="Ciriello F."/>
            <person name="Baroni S."/>
            <person name="Pandini V."/>
            <person name="Canevari G."/>
            <person name="Bolognesi M."/>
            <person name="Aliverti A."/>
        </authorList>
    </citation>
    <scope>X-RAY CRYSTALLOGRAPHY (2.5 ANGSTROMS)</scope>
    <scope>COFACTOR</scope>
    <scope>FAD-BINDING SITES</scope>
</reference>
<sequence length="342" mass="37847">MAQVLIVGAGMTGSLCAALLRRQTSGPLYLAVWDKAEDSGGRMTTACSPHNPQCTADLGAQYITCTPHYAKKHQRFYDELLAYGVLRPLSSPIEGMVMKEGDCNFVAPQGISSIIKHYLKESGAEVYFRHRVTQINLRDDKWEVSKQTGSPEQFDLIVLTMPVPEILQLQGDITTLISECQRQQLEAVSYSSRYALGLFYEAGTKIDVPWAGQYITSNPCIRFVSIDNKKRNIESSEIGPSLVIHTTVPFGVTYLEHSIEDVQELVFQQLENILPGLPQPIATKCQKWRHSQVTNAAANCPGQMTLHHKPFLACGGDGFTQSNFDGCITSALCVLEALKNYI</sequence>
<evidence type="ECO:0000255" key="1"/>
<evidence type="ECO:0000269" key="2">
    <source>
    </source>
</evidence>
<evidence type="ECO:0000269" key="3">
    <source>
    </source>
</evidence>
<evidence type="ECO:0000269" key="4">
    <source>
    </source>
</evidence>
<evidence type="ECO:0000269" key="5">
    <source>
    </source>
</evidence>
<evidence type="ECO:0000269" key="6">
    <source>
    </source>
</evidence>
<evidence type="ECO:0000269" key="7">
    <source>
    </source>
</evidence>
<evidence type="ECO:0000303" key="8">
    <source>
    </source>
</evidence>
<evidence type="ECO:0000303" key="9">
    <source>
    </source>
</evidence>
<evidence type="ECO:0000305" key="10"/>
<evidence type="ECO:0007829" key="11">
    <source>
        <dbReference type="PDB" id="3QJ4"/>
    </source>
</evidence>
<accession>Q5VYX0</accession>
<accession>Q9BS33</accession>
<accession>Q9NUP8</accession>
<keyword id="KW-0002">3D-structure</keyword>
<keyword id="KW-0025">Alternative splicing</keyword>
<keyword id="KW-0274">FAD</keyword>
<keyword id="KW-0285">Flavoprotein</keyword>
<keyword id="KW-0520">NAD</keyword>
<keyword id="KW-0521">NADP</keyword>
<keyword id="KW-0560">Oxidoreductase</keyword>
<keyword id="KW-1267">Proteomics identification</keyword>
<keyword id="KW-1185">Reference proteome</keyword>
<keyword id="KW-0964">Secreted</keyword>
<keyword id="KW-0732">Signal</keyword>